<feature type="signal peptide" evidence="2">
    <location>
        <begin position="1"/>
        <end position="17"/>
    </location>
</feature>
<feature type="chain" id="PRO_0000407209" description="Extracellular metalloprotease VDBG_07883">
    <location>
        <begin position="18"/>
        <end position="276"/>
    </location>
</feature>
<feature type="active site" evidence="3">
    <location>
        <position position="192"/>
    </location>
</feature>
<feature type="binding site" evidence="3">
    <location>
        <position position="191"/>
    </location>
    <ligand>
        <name>Zn(2+)</name>
        <dbReference type="ChEBI" id="CHEBI:29105"/>
        <note>catalytic</note>
    </ligand>
</feature>
<feature type="binding site" evidence="3">
    <location>
        <position position="195"/>
    </location>
    <ligand>
        <name>Zn(2+)</name>
        <dbReference type="ChEBI" id="CHEBI:29105"/>
        <note>catalytic</note>
    </ligand>
</feature>
<feature type="glycosylation site" description="N-linked (GlcNAc...) asparagine" evidence="2">
    <location>
        <position position="70"/>
    </location>
</feature>
<feature type="glycosylation site" description="N-linked (GlcNAc...) asparagine" evidence="2">
    <location>
        <position position="102"/>
    </location>
</feature>
<feature type="glycosylation site" description="N-linked (GlcNAc...) asparagine" evidence="2">
    <location>
        <position position="222"/>
    </location>
</feature>
<feature type="disulfide bond" evidence="1">
    <location>
        <begin position="227"/>
        <end position="254"/>
    </location>
</feature>
<organism>
    <name type="scientific">Verticillium alfalfae (strain VaMs.102 / ATCC MYA-4576 / FGSC 10136)</name>
    <name type="common">Verticillium wilt of alfalfa</name>
    <name type="synonym">Verticillium albo-atrum</name>
    <dbReference type="NCBI Taxonomy" id="526221"/>
    <lineage>
        <taxon>Eukaryota</taxon>
        <taxon>Fungi</taxon>
        <taxon>Dikarya</taxon>
        <taxon>Ascomycota</taxon>
        <taxon>Pezizomycotina</taxon>
        <taxon>Sordariomycetes</taxon>
        <taxon>Hypocreomycetidae</taxon>
        <taxon>Glomerellales</taxon>
        <taxon>Plectosphaerellaceae</taxon>
        <taxon>Verticillium</taxon>
    </lineage>
</organism>
<name>MEP2_VERA1</name>
<evidence type="ECO:0000250" key="1"/>
<evidence type="ECO:0000255" key="2"/>
<evidence type="ECO:0000255" key="3">
    <source>
        <dbReference type="PROSITE-ProRule" id="PRU10095"/>
    </source>
</evidence>
<evidence type="ECO:0000305" key="4"/>
<keyword id="KW-1015">Disulfide bond</keyword>
<keyword id="KW-0325">Glycoprotein</keyword>
<keyword id="KW-0378">Hydrolase</keyword>
<keyword id="KW-0479">Metal-binding</keyword>
<keyword id="KW-0482">Metalloprotease</keyword>
<keyword id="KW-0645">Protease</keyword>
<keyword id="KW-1185">Reference proteome</keyword>
<keyword id="KW-0964">Secreted</keyword>
<keyword id="KW-0732">Signal</keyword>
<keyword id="KW-0862">Zinc</keyword>
<protein>
    <recommendedName>
        <fullName>Extracellular metalloprotease VDBG_07883</fullName>
        <ecNumber>3.4.24.-</ecNumber>
    </recommendedName>
</protein>
<dbReference type="EC" id="3.4.24.-"/>
<dbReference type="EMBL" id="DS985224">
    <property type="protein sequence ID" value="EEY21773.1"/>
    <property type="molecule type" value="Genomic_DNA"/>
</dbReference>
<dbReference type="RefSeq" id="XP_003001624.1">
    <property type="nucleotide sequence ID" value="XM_003001578.1"/>
</dbReference>
<dbReference type="SMR" id="C9SSK8"/>
<dbReference type="STRING" id="526221.C9SSK8"/>
<dbReference type="MEROPS" id="M43.008"/>
<dbReference type="GeneID" id="9529679"/>
<dbReference type="KEGG" id="val:VDBG_07883"/>
<dbReference type="eggNOG" id="ENOG502RYKG">
    <property type="taxonomic scope" value="Eukaryota"/>
</dbReference>
<dbReference type="HOGENOM" id="CLU_048726_0_0_1"/>
<dbReference type="OMA" id="FAPHNIQ"/>
<dbReference type="OrthoDB" id="536211at2759"/>
<dbReference type="Proteomes" id="UP000008698">
    <property type="component" value="Unassembled WGS sequence"/>
</dbReference>
<dbReference type="GO" id="GO:0005576">
    <property type="term" value="C:extracellular region"/>
    <property type="evidence" value="ECO:0007669"/>
    <property type="project" value="UniProtKB-SubCell"/>
</dbReference>
<dbReference type="GO" id="GO:0046872">
    <property type="term" value="F:metal ion binding"/>
    <property type="evidence" value="ECO:0007669"/>
    <property type="project" value="UniProtKB-KW"/>
</dbReference>
<dbReference type="GO" id="GO:0008237">
    <property type="term" value="F:metallopeptidase activity"/>
    <property type="evidence" value="ECO:0007669"/>
    <property type="project" value="UniProtKB-KW"/>
</dbReference>
<dbReference type="GO" id="GO:0006508">
    <property type="term" value="P:proteolysis"/>
    <property type="evidence" value="ECO:0007669"/>
    <property type="project" value="UniProtKB-KW"/>
</dbReference>
<dbReference type="CDD" id="cd04275">
    <property type="entry name" value="ZnMc_pappalysin_like"/>
    <property type="match status" value="1"/>
</dbReference>
<dbReference type="Gene3D" id="3.40.390.10">
    <property type="entry name" value="Collagenase (Catalytic Domain)"/>
    <property type="match status" value="1"/>
</dbReference>
<dbReference type="InterPro" id="IPR024079">
    <property type="entry name" value="MetalloPept_cat_dom_sf"/>
</dbReference>
<dbReference type="InterPro" id="IPR008754">
    <property type="entry name" value="Peptidase_M43"/>
</dbReference>
<dbReference type="PANTHER" id="PTHR47466">
    <property type="match status" value="1"/>
</dbReference>
<dbReference type="PANTHER" id="PTHR47466:SF1">
    <property type="entry name" value="METALLOPROTEASE MEP1 (AFU_ORTHOLOGUE AFUA_1G07730)-RELATED"/>
    <property type="match status" value="1"/>
</dbReference>
<dbReference type="Pfam" id="PF05572">
    <property type="entry name" value="Peptidase_M43"/>
    <property type="match status" value="1"/>
</dbReference>
<dbReference type="SUPFAM" id="SSF55486">
    <property type="entry name" value="Metalloproteases ('zincins'), catalytic domain"/>
    <property type="match status" value="1"/>
</dbReference>
<dbReference type="PROSITE" id="PS00142">
    <property type="entry name" value="ZINC_PROTEASE"/>
    <property type="match status" value="1"/>
</dbReference>
<proteinExistence type="inferred from homology"/>
<sequence>MQSKFLWIAAASAATAAAQVPARLCGTAQPTMDDLVIAAGLAAEGKDNRRGLHPEDPIVVPTLFHVLAINETVAGGYLTEKSLQDQLDVMNADFGPSNVIFNLTATTRTVNRRWAQDLDEIPMRRALRQGGQETLNIYFMPYVSGYLGYCTFPNFWDAGSDEFIYDGCAVLSDSLPGGSLARYNLGRTATHEIGHWFDLFHTFSGGCGCVGDMIHDTPAMLNATGGCPVGKDTCPDRPGLDPIHNYMDYSDDACMNEFTPGQNFRMRSAWYNIRTK</sequence>
<accession>C9SSK8</accession>
<comment type="function">
    <text evidence="1">Secreted metalloproteinase that allows assimilation of proteinaceous substrates.</text>
</comment>
<comment type="subcellular location">
    <subcellularLocation>
        <location evidence="1">Secreted</location>
    </subcellularLocation>
</comment>
<comment type="similarity">
    <text evidence="4">Belongs to the peptidase M43B family.</text>
</comment>
<reference key="1">
    <citation type="journal article" date="2011" name="PLoS Pathog.">
        <title>Comparative genomics yields insights into niche adaptation of plant vascular wilt pathogens.</title>
        <authorList>
            <person name="Klosterman S.J."/>
            <person name="Subbarao K.V."/>
            <person name="Kang S."/>
            <person name="Veronese P."/>
            <person name="Gold S.E."/>
            <person name="Thomma B.P.H.J."/>
            <person name="Chen Z."/>
            <person name="Henrissat B."/>
            <person name="Lee Y.-H."/>
            <person name="Park J."/>
            <person name="Garcia-Pedrajas M.D."/>
            <person name="Barbara D.J."/>
            <person name="Anchieta A."/>
            <person name="de Jonge R."/>
            <person name="Santhanam P."/>
            <person name="Maruthachalam K."/>
            <person name="Atallah Z."/>
            <person name="Amyotte S.G."/>
            <person name="Paz Z."/>
            <person name="Inderbitzin P."/>
            <person name="Hayes R.J."/>
            <person name="Heiman D.I."/>
            <person name="Young S."/>
            <person name="Zeng Q."/>
            <person name="Engels R."/>
            <person name="Galagan J."/>
            <person name="Cuomo C.A."/>
            <person name="Dobinson K.F."/>
            <person name="Ma L.-J."/>
        </authorList>
    </citation>
    <scope>NUCLEOTIDE SEQUENCE [LARGE SCALE GENOMIC DNA]</scope>
    <source>
        <strain>VaMs.102 / ATCC MYA-4576 / FGSC 10136</strain>
    </source>
</reference>
<gene>
    <name type="ORF">VDBG_07883</name>
</gene>